<reference key="1">
    <citation type="journal article" date="1996" name="J. Biochem.">
        <title>An aspartate aminotransferase from an extremely thermophilic bacterium, Thermus thermophilus HB8.</title>
        <authorList>
            <person name="Okamoto A."/>
            <person name="Kato R."/>
            <person name="Masui R."/>
            <person name="Yamagishi A."/>
            <person name="Oshima T."/>
            <person name="Kuramitsu S."/>
        </authorList>
    </citation>
    <scope>NUCLEOTIDE SEQUENCE [GENOMIC DNA]</scope>
    <scope>FUNCTION</scope>
    <scope>CATALYTIC ACTIVITY</scope>
    <scope>BIOPHYSICOCHEMICAL PROPERTIES</scope>
    <scope>COFACTOR</scope>
    <source>
        <strain>ATCC 27634 / DSM 579 / HB8</strain>
    </source>
</reference>
<reference key="2">
    <citation type="submission" date="2004-11" db="EMBL/GenBank/DDBJ databases">
        <title>Complete genome sequence of Thermus thermophilus HB8.</title>
        <authorList>
            <person name="Masui R."/>
            <person name="Kurokawa K."/>
            <person name="Nakagawa N."/>
            <person name="Tokunaga F."/>
            <person name="Koyama Y."/>
            <person name="Shibata T."/>
            <person name="Oshima T."/>
            <person name="Yokoyama S."/>
            <person name="Yasunaga T."/>
            <person name="Kuramitsu S."/>
        </authorList>
    </citation>
    <scope>NUCLEOTIDE SEQUENCE [LARGE SCALE GENOMIC DNA]</scope>
    <source>
        <strain>ATCC 27634 / DSM 579 / HB8</strain>
    </source>
</reference>
<reference key="3">
    <citation type="journal article" date="2014" name="Plant Cell">
        <title>Phylobiochemical characterization of class-Ib aspartate/prephenate aminotransferases reveals evolution of the plant arogenate phenylalanine pathway.</title>
        <authorList>
            <person name="Dornfeld C."/>
            <person name="Weisberg A.J."/>
            <person name="Ritesh K.C."/>
            <person name="Dudareva N."/>
            <person name="Jelesko J.G."/>
            <person name="Maeda H.A."/>
        </authorList>
    </citation>
    <scope>FUNCTION</scope>
    <scope>CATALYTIC ACTIVITY</scope>
</reference>
<reference key="4">
    <citation type="journal article" date="2019" name="FEBS J.">
        <title>Tyrosine metabolism: identification of a key residue in the acquisition of prephenate aminotransferase activity by 1beta aspartate aminotransferase.</title>
        <authorList>
            <person name="Giustini C."/>
            <person name="Graindorge M."/>
            <person name="Cobessi D."/>
            <person name="Crouzy S."/>
            <person name="Robin A."/>
            <person name="Curien G."/>
            <person name="Matringe M."/>
        </authorList>
    </citation>
    <scope>FUNCTION</scope>
    <scope>CATALYTIC ACTIVITY</scope>
    <scope>SUBSTRATE SPECIFICITY</scope>
    <scope>BIOPHYSICOCHEMICAL PROPERTIES</scope>
    <scope>MUTAGENESIS OF LYS-12</scope>
</reference>
<reference evidence="10 11" key="5">
    <citation type="journal article" date="1999" name="Biochemistry">
        <title>Structure of Thermus thermophilus HB8 aspartate aminotransferase and its complex with maleate.</title>
        <authorList>
            <person name="Nakai T."/>
            <person name="Okada K."/>
            <person name="Akutsu S."/>
            <person name="Miyahara I."/>
            <person name="Kawaguchi S."/>
            <person name="Kato R."/>
            <person name="Kuramitsu S."/>
            <person name="Hirotsu K."/>
        </authorList>
    </citation>
    <scope>X-RAY CRYSTALLOGRAPHY (1.8 ANGSTROMS) IN COMPLEX WITH MALEIC ACID AND PYRIDOXAL PHOSPHATE</scope>
    <scope>SUBUNIT</scope>
    <source>
        <strain>ATCC 27634 / DSM 579 / HB8</strain>
    </source>
</reference>
<reference evidence="8 9 12 13 14 15 16" key="6">
    <citation type="journal article" date="2001" name="J. Biochem.">
        <title>Substrate recognition mechanism of thermophilic dual-substrate enzyme.</title>
        <authorList>
            <person name="Ura H."/>
            <person name="Nakai T."/>
            <person name="Kawaguchi S."/>
            <person name="Miyahara I."/>
            <person name="Hirotsu K."/>
            <person name="Kuramitsu S."/>
        </authorList>
    </citation>
    <scope>X-RAY CRYSTALLOGRAPHY (2.2 ANGSTROMS) IN COMPLEXES WITH PYRIDOXAL PHOSPHATE AND ASPARTATE</scope>
    <scope>COFACTOR</scope>
    <scope>SUBUNIT</scope>
</reference>
<dbReference type="EC" id="2.6.1.1" evidence="4 6"/>
<dbReference type="EC" id="2.6.1.78" evidence="4 5"/>
<dbReference type="EMBL" id="D38459">
    <property type="protein sequence ID" value="BAA07487.1"/>
    <property type="molecule type" value="Genomic_DNA"/>
</dbReference>
<dbReference type="EMBL" id="AP008226">
    <property type="protein sequence ID" value="BAD69869.1"/>
    <property type="molecule type" value="Genomic_DNA"/>
</dbReference>
<dbReference type="RefSeq" id="WP_011227669.1">
    <property type="nucleotide sequence ID" value="NC_006461.1"/>
</dbReference>
<dbReference type="RefSeq" id="YP_143312.1">
    <property type="nucleotide sequence ID" value="NC_006461.1"/>
</dbReference>
<dbReference type="PDB" id="1B5O">
    <property type="method" value="X-ray"/>
    <property type="resolution" value="2.20 A"/>
    <property type="chains" value="A/B=1-385"/>
</dbReference>
<dbReference type="PDB" id="1B5P">
    <property type="method" value="X-ray"/>
    <property type="resolution" value="1.80 A"/>
    <property type="chains" value="A/B=1-385"/>
</dbReference>
<dbReference type="PDB" id="1BJW">
    <property type="method" value="X-ray"/>
    <property type="resolution" value="1.80 A"/>
    <property type="chains" value="A/B=1-382"/>
</dbReference>
<dbReference type="PDB" id="1BKG">
    <property type="method" value="X-ray"/>
    <property type="resolution" value="2.60 A"/>
    <property type="chains" value="A/B/C/D=1-385"/>
</dbReference>
<dbReference type="PDB" id="1GC3">
    <property type="method" value="X-ray"/>
    <property type="resolution" value="3.30 A"/>
    <property type="chains" value="A/B/C/D/E/F/G/H=1-385"/>
</dbReference>
<dbReference type="PDB" id="1GC4">
    <property type="method" value="X-ray"/>
    <property type="resolution" value="3.30 A"/>
    <property type="chains" value="A/B/C/D=1-385"/>
</dbReference>
<dbReference type="PDB" id="1GCK">
    <property type="method" value="X-ray"/>
    <property type="resolution" value="2.50 A"/>
    <property type="chains" value="A/B=1-385"/>
</dbReference>
<dbReference type="PDB" id="5BJ3">
    <property type="method" value="X-ray"/>
    <property type="resolution" value="2.20 A"/>
    <property type="chains" value="A/B/C/D=1-385"/>
</dbReference>
<dbReference type="PDB" id="5BJ4">
    <property type="method" value="X-ray"/>
    <property type="resolution" value="2.00 A"/>
    <property type="chains" value="A/B=1-385"/>
</dbReference>
<dbReference type="PDBsum" id="1B5O"/>
<dbReference type="PDBsum" id="1B5P"/>
<dbReference type="PDBsum" id="1BJW"/>
<dbReference type="PDBsum" id="1BKG"/>
<dbReference type="PDBsum" id="1GC3"/>
<dbReference type="PDBsum" id="1GC4"/>
<dbReference type="PDBsum" id="1GCK"/>
<dbReference type="PDBsum" id="5BJ3"/>
<dbReference type="PDBsum" id="5BJ4"/>
<dbReference type="SMR" id="Q56232"/>
<dbReference type="DrugBank" id="DB04299">
    <property type="generic name" value="Maleic acid"/>
</dbReference>
<dbReference type="DrugBank" id="DB02142">
    <property type="generic name" value="Pyridoxamine-5'-Phosphate"/>
</dbReference>
<dbReference type="EnsemblBacteria" id="BAD69869">
    <property type="protein sequence ID" value="BAD69869"/>
    <property type="gene ID" value="BAD69869"/>
</dbReference>
<dbReference type="GeneID" id="3168657"/>
<dbReference type="KEGG" id="ttj:TTHA0046"/>
<dbReference type="PATRIC" id="fig|300852.9.peg.44"/>
<dbReference type="eggNOG" id="COG0436">
    <property type="taxonomic scope" value="Bacteria"/>
</dbReference>
<dbReference type="HOGENOM" id="CLU_017584_4_3_0"/>
<dbReference type="PhylomeDB" id="Q56232"/>
<dbReference type="BRENDA" id="2.6.1.1">
    <property type="organism ID" value="2305"/>
</dbReference>
<dbReference type="BRENDA" id="2.6.1.78">
    <property type="organism ID" value="2305"/>
</dbReference>
<dbReference type="SABIO-RK" id="Q56232"/>
<dbReference type="EvolutionaryTrace" id="Q56232"/>
<dbReference type="Proteomes" id="UP000000532">
    <property type="component" value="Chromosome"/>
</dbReference>
<dbReference type="GO" id="GO:0005737">
    <property type="term" value="C:cytoplasm"/>
    <property type="evidence" value="ECO:0007669"/>
    <property type="project" value="UniProtKB-SubCell"/>
</dbReference>
<dbReference type="GO" id="GO:0033853">
    <property type="term" value="F:aspartate-prephenate aminotransferase activity"/>
    <property type="evidence" value="ECO:0007669"/>
    <property type="project" value="UniProtKB-EC"/>
</dbReference>
<dbReference type="GO" id="GO:0004069">
    <property type="term" value="F:L-aspartate:2-oxoglutarate aminotransferase activity"/>
    <property type="evidence" value="ECO:0007669"/>
    <property type="project" value="UniProtKB-EC"/>
</dbReference>
<dbReference type="GO" id="GO:0030170">
    <property type="term" value="F:pyridoxal phosphate binding"/>
    <property type="evidence" value="ECO:0007669"/>
    <property type="project" value="InterPro"/>
</dbReference>
<dbReference type="GO" id="GO:0006520">
    <property type="term" value="P:amino acid metabolic process"/>
    <property type="evidence" value="ECO:0007669"/>
    <property type="project" value="InterPro"/>
</dbReference>
<dbReference type="GO" id="GO:0009058">
    <property type="term" value="P:biosynthetic process"/>
    <property type="evidence" value="ECO:0007669"/>
    <property type="project" value="InterPro"/>
</dbReference>
<dbReference type="CDD" id="cd00609">
    <property type="entry name" value="AAT_like"/>
    <property type="match status" value="1"/>
</dbReference>
<dbReference type="FunFam" id="3.40.640.10:FF:000033">
    <property type="entry name" value="Aspartate aminotransferase"/>
    <property type="match status" value="1"/>
</dbReference>
<dbReference type="Gene3D" id="3.90.1150.10">
    <property type="entry name" value="Aspartate Aminotransferase, domain 1"/>
    <property type="match status" value="1"/>
</dbReference>
<dbReference type="Gene3D" id="3.40.640.10">
    <property type="entry name" value="Type I PLP-dependent aspartate aminotransferase-like (Major domain)"/>
    <property type="match status" value="1"/>
</dbReference>
<dbReference type="InterPro" id="IPR004839">
    <property type="entry name" value="Aminotransferase_I/II_large"/>
</dbReference>
<dbReference type="InterPro" id="IPR050596">
    <property type="entry name" value="AspAT/PAT-like"/>
</dbReference>
<dbReference type="InterPro" id="IPR004838">
    <property type="entry name" value="NHTrfase_class1_PyrdxlP-BS"/>
</dbReference>
<dbReference type="InterPro" id="IPR015424">
    <property type="entry name" value="PyrdxlP-dep_Trfase"/>
</dbReference>
<dbReference type="InterPro" id="IPR015421">
    <property type="entry name" value="PyrdxlP-dep_Trfase_major"/>
</dbReference>
<dbReference type="InterPro" id="IPR015422">
    <property type="entry name" value="PyrdxlP-dep_Trfase_small"/>
</dbReference>
<dbReference type="PANTHER" id="PTHR46383">
    <property type="entry name" value="ASPARTATE AMINOTRANSFERASE"/>
    <property type="match status" value="1"/>
</dbReference>
<dbReference type="PANTHER" id="PTHR46383:SF1">
    <property type="entry name" value="ASPARTATE AMINOTRANSFERASE"/>
    <property type="match status" value="1"/>
</dbReference>
<dbReference type="Pfam" id="PF00155">
    <property type="entry name" value="Aminotran_1_2"/>
    <property type="match status" value="1"/>
</dbReference>
<dbReference type="SUPFAM" id="SSF53383">
    <property type="entry name" value="PLP-dependent transferases"/>
    <property type="match status" value="1"/>
</dbReference>
<dbReference type="PROSITE" id="PS00105">
    <property type="entry name" value="AA_TRANSFER_CLASS_1"/>
    <property type="match status" value="1"/>
</dbReference>
<comment type="function">
    <text evidence="4 5 6">Catalyzes the reversible conversion of aspartate and 2-oxoglutarate to glutamate and oxaloacetate (PubMed:25070637, PubMed:8907187). Can also transaminate prephenate in the presence of aspartate (PubMed:25070637, PubMed:30771275).</text>
</comment>
<comment type="catalytic activity">
    <reaction evidence="4 6">
        <text>L-aspartate + 2-oxoglutarate = oxaloacetate + L-glutamate</text>
        <dbReference type="Rhea" id="RHEA:21824"/>
        <dbReference type="ChEBI" id="CHEBI:16452"/>
        <dbReference type="ChEBI" id="CHEBI:16810"/>
        <dbReference type="ChEBI" id="CHEBI:29985"/>
        <dbReference type="ChEBI" id="CHEBI:29991"/>
        <dbReference type="EC" id="2.6.1.1"/>
    </reaction>
</comment>
<comment type="catalytic activity">
    <reaction evidence="4 5">
        <text>L-arogenate + oxaloacetate = prephenate + L-aspartate</text>
        <dbReference type="Rhea" id="RHEA:20445"/>
        <dbReference type="ChEBI" id="CHEBI:16452"/>
        <dbReference type="ChEBI" id="CHEBI:29934"/>
        <dbReference type="ChEBI" id="CHEBI:29991"/>
        <dbReference type="ChEBI" id="CHEBI:58180"/>
        <dbReference type="EC" id="2.6.1.78"/>
    </reaction>
</comment>
<comment type="cofactor">
    <cofactor evidence="3 6">
        <name>pyridoxal 5'-phosphate</name>
        <dbReference type="ChEBI" id="CHEBI:597326"/>
    </cofactor>
</comment>
<comment type="biophysicochemical properties">
    <kinetics>
        <KM evidence="6">1.1 mM for L-aspartate (at 45 degrees Celsius)</KM>
        <KM evidence="6">1 mM for 2-oxoglutarate (at 45 degrees Celsius)</KM>
        <KM evidence="5">150 uM for prephenate</KM>
        <KM evidence="5">25.3 uM for oxaloacetate</KM>
        <text evidence="5">kcat is 7.7 sec(-1) toward prephenate. kcat is 32.2 sec(-1) toward oxaloacetate.</text>
    </kinetics>
</comment>
<comment type="subunit">
    <text evidence="2 3">Homodimer.</text>
</comment>
<comment type="subcellular location">
    <subcellularLocation>
        <location evidence="7">Cytoplasm</location>
    </subcellularLocation>
</comment>
<comment type="similarity">
    <text evidence="7">Belongs to the class-I pyridoxal-phosphate-dependent aminotransferase family.</text>
</comment>
<name>AAPAT_THET8</name>
<evidence type="ECO:0000250" key="1">
    <source>
        <dbReference type="UniProtKB" id="P00509"/>
    </source>
</evidence>
<evidence type="ECO:0000269" key="2">
    <source>
    </source>
</evidence>
<evidence type="ECO:0000269" key="3">
    <source>
    </source>
</evidence>
<evidence type="ECO:0000269" key="4">
    <source>
    </source>
</evidence>
<evidence type="ECO:0000269" key="5">
    <source>
    </source>
</evidence>
<evidence type="ECO:0000269" key="6">
    <source>
    </source>
</evidence>
<evidence type="ECO:0000305" key="7"/>
<evidence type="ECO:0007744" key="8">
    <source>
        <dbReference type="PDB" id="1B5O"/>
    </source>
</evidence>
<evidence type="ECO:0007744" key="9">
    <source>
        <dbReference type="PDB" id="1B5P"/>
    </source>
</evidence>
<evidence type="ECO:0007744" key="10">
    <source>
        <dbReference type="PDB" id="1BJW"/>
    </source>
</evidence>
<evidence type="ECO:0007744" key="11">
    <source>
        <dbReference type="PDB" id="1BKG"/>
    </source>
</evidence>
<evidence type="ECO:0007744" key="12">
    <source>
        <dbReference type="PDB" id="1GC3"/>
    </source>
</evidence>
<evidence type="ECO:0007744" key="13">
    <source>
        <dbReference type="PDB" id="1GC4"/>
    </source>
</evidence>
<evidence type="ECO:0007744" key="14">
    <source>
        <dbReference type="PDB" id="1GCK"/>
    </source>
</evidence>
<evidence type="ECO:0007744" key="15">
    <source>
        <dbReference type="PDB" id="5BJ3"/>
    </source>
</evidence>
<evidence type="ECO:0007744" key="16">
    <source>
        <dbReference type="PDB" id="5BJ4"/>
    </source>
</evidence>
<evidence type="ECO:0007829" key="17">
    <source>
        <dbReference type="PDB" id="1B5P"/>
    </source>
</evidence>
<evidence type="ECO:0007829" key="18">
    <source>
        <dbReference type="PDB" id="1BJW"/>
    </source>
</evidence>
<feature type="chain" id="PRO_0000123856" description="Aspartate/prephenate aminotransferase">
    <location>
        <begin position="1"/>
        <end position="385"/>
    </location>
</feature>
<feature type="binding site" evidence="1">
    <location>
        <position position="39"/>
    </location>
    <ligand>
        <name>L-aspartate</name>
        <dbReference type="ChEBI" id="CHEBI:29991"/>
    </ligand>
</feature>
<feature type="binding site" evidence="14">
    <location>
        <position position="125"/>
    </location>
    <ligand>
        <name>L-aspartate</name>
        <dbReference type="ChEBI" id="CHEBI:29991"/>
    </ligand>
</feature>
<feature type="binding site" evidence="14">
    <location>
        <position position="175"/>
    </location>
    <ligand>
        <name>L-aspartate</name>
        <dbReference type="ChEBI" id="CHEBI:29991"/>
    </ligand>
</feature>
<feature type="binding site" evidence="14">
    <location>
        <position position="361"/>
    </location>
    <ligand>
        <name>L-aspartate</name>
        <dbReference type="ChEBI" id="CHEBI:29991"/>
    </ligand>
</feature>
<feature type="site" description="Important for prephenate aminotransferase activity" evidence="5">
    <location>
        <position position="12"/>
    </location>
</feature>
<feature type="modified residue" description="N6-(pyridoxal phosphate)lysine" evidence="2 3 8 9 15 16">
    <location>
        <position position="234"/>
    </location>
</feature>
<feature type="mutagenesis site" description="10-fold increase in Km for prephenate. Does not affect Km for oxaloacetate." evidence="5">
    <original>K</original>
    <variation>G</variation>
    <location>
        <position position="12"/>
    </location>
</feature>
<feature type="helix" evidence="17">
    <location>
        <begin position="6"/>
        <end position="10"/>
    </location>
</feature>
<feature type="helix" evidence="17">
    <location>
        <begin position="15"/>
        <end position="28"/>
    </location>
</feature>
<feature type="helix" evidence="17">
    <location>
        <begin position="47"/>
        <end position="58"/>
    </location>
</feature>
<feature type="helix" evidence="17">
    <location>
        <begin position="71"/>
        <end position="83"/>
    </location>
</feature>
<feature type="helix" evidence="17">
    <location>
        <begin position="91"/>
        <end position="93"/>
    </location>
</feature>
<feature type="strand" evidence="17">
    <location>
        <begin position="94"/>
        <end position="98"/>
    </location>
</feature>
<feature type="helix" evidence="17">
    <location>
        <begin position="99"/>
        <end position="111"/>
    </location>
</feature>
<feature type="strand" evidence="17">
    <location>
        <begin position="117"/>
        <end position="123"/>
    </location>
</feature>
<feature type="helix" evidence="17">
    <location>
        <begin position="127"/>
        <end position="134"/>
    </location>
</feature>
<feature type="strand" evidence="17">
    <location>
        <begin position="138"/>
        <end position="143"/>
    </location>
</feature>
<feature type="helix" evidence="17">
    <location>
        <begin position="146"/>
        <end position="148"/>
    </location>
</feature>
<feature type="helix" evidence="17">
    <location>
        <begin position="154"/>
        <end position="158"/>
    </location>
</feature>
<feature type="strand" evidence="17">
    <location>
        <begin position="165"/>
        <end position="173"/>
    </location>
</feature>
<feature type="turn" evidence="17">
    <location>
        <begin position="175"/>
        <end position="177"/>
    </location>
</feature>
<feature type="helix" evidence="17">
    <location>
        <begin position="183"/>
        <end position="195"/>
    </location>
</feature>
<feature type="strand" evidence="17">
    <location>
        <begin position="199"/>
        <end position="203"/>
    </location>
</feature>
<feature type="turn" evidence="17">
    <location>
        <begin position="205"/>
        <end position="208"/>
    </location>
</feature>
<feature type="strand" evidence="17">
    <location>
        <begin position="210"/>
        <end position="213"/>
    </location>
</feature>
<feature type="helix" evidence="17">
    <location>
        <begin position="218"/>
        <end position="220"/>
    </location>
</feature>
<feature type="turn" evidence="17">
    <location>
        <begin position="223"/>
        <end position="225"/>
    </location>
</feature>
<feature type="strand" evidence="17">
    <location>
        <begin position="226"/>
        <end position="232"/>
    </location>
</feature>
<feature type="turn" evidence="17">
    <location>
        <begin position="233"/>
        <end position="237"/>
    </location>
</feature>
<feature type="helix" evidence="17">
    <location>
        <begin position="239"/>
        <end position="241"/>
    </location>
</feature>
<feature type="strand" evidence="17">
    <location>
        <begin position="244"/>
        <end position="247"/>
    </location>
</feature>
<feature type="helix" evidence="17">
    <location>
        <begin position="250"/>
        <end position="261"/>
    </location>
</feature>
<feature type="turn" evidence="17">
    <location>
        <begin position="262"/>
        <end position="264"/>
    </location>
</feature>
<feature type="strand" evidence="18">
    <location>
        <begin position="265"/>
        <end position="267"/>
    </location>
</feature>
<feature type="helix" evidence="17">
    <location>
        <begin position="269"/>
        <end position="280"/>
    </location>
</feature>
<feature type="helix" evidence="17">
    <location>
        <begin position="282"/>
        <end position="310"/>
    </location>
</feature>
<feature type="strand" evidence="17">
    <location>
        <begin position="318"/>
        <end position="326"/>
    </location>
</feature>
<feature type="turn" evidence="17">
    <location>
        <begin position="328"/>
        <end position="330"/>
    </location>
</feature>
<feature type="helix" evidence="17">
    <location>
        <begin position="334"/>
        <end position="343"/>
    </location>
</feature>
<feature type="strand" evidence="17">
    <location>
        <begin position="349"/>
        <end position="351"/>
    </location>
</feature>
<feature type="helix" evidence="17">
    <location>
        <begin position="352"/>
        <end position="354"/>
    </location>
</feature>
<feature type="strand" evidence="17">
    <location>
        <begin position="359"/>
        <end position="363"/>
    </location>
</feature>
<feature type="helix" evidence="17">
    <location>
        <begin position="368"/>
        <end position="377"/>
    </location>
</feature>
<feature type="helix" evidence="17">
    <location>
        <begin position="378"/>
        <end position="381"/>
    </location>
</feature>
<sequence length="385" mass="42051">MRGLSRRVQAMKPSATVAVNAKALELRRQGVDLVALTAGEPDFDTPEHVKEAARRALAQGKTKYAPPAGIPELREALAEKFRRENGLSVTPEETIVTVGGKQALFNLFQAILDPGDEVIVLSPYWVSYPEMVRFAGGVVVEVETLPEEGFVPDPERVRRAITPRTKALVVNSPNNPTGAVYPKEVLEALARLAVEHDFYLVSDEIYEHLLYEGEHFSPGRVAPEHTLTVNGAAKAFAMTGWRIGYACGPKEVIKAMASVSSQSTTSPDTIAQWATLEALTNQEASRAFVEMAREAYRRRRDLLLEGLTALGLKAVRPSGAFYVLMDTSPIAPDEVRAAERLLEAGVAVVPGTDFAAFGHVRLSYATSEENLRKALERFARVLGRA</sequence>
<proteinExistence type="evidence at protein level"/>
<gene>
    <name type="primary">aspC</name>
    <name type="ordered locus">TTHA0046</name>
</gene>
<organism>
    <name type="scientific">Thermus thermophilus (strain ATCC 27634 / DSM 579 / HB8)</name>
    <dbReference type="NCBI Taxonomy" id="300852"/>
    <lineage>
        <taxon>Bacteria</taxon>
        <taxon>Thermotogati</taxon>
        <taxon>Deinococcota</taxon>
        <taxon>Deinococci</taxon>
        <taxon>Thermales</taxon>
        <taxon>Thermaceae</taxon>
        <taxon>Thermus</taxon>
    </lineage>
</organism>
<accession>Q56232</accession>
<accession>Q5SM97</accession>
<keyword id="KW-0002">3D-structure</keyword>
<keyword id="KW-0032">Aminotransferase</keyword>
<keyword id="KW-0963">Cytoplasm</keyword>
<keyword id="KW-0663">Pyridoxal phosphate</keyword>
<keyword id="KW-1185">Reference proteome</keyword>
<keyword id="KW-0808">Transferase</keyword>
<protein>
    <recommendedName>
        <fullName evidence="7">Aspartate/prephenate aminotransferase</fullName>
        <shortName evidence="7">AspAT / PAT</shortName>
        <ecNumber evidence="4 6">2.6.1.1</ecNumber>
        <ecNumber evidence="4 5">2.6.1.78</ecNumber>
    </recommendedName>
    <alternativeName>
        <fullName>Transaminase A</fullName>
    </alternativeName>
</protein>